<keyword id="KW-0067">ATP-binding</keyword>
<keyword id="KW-0238">DNA-binding</keyword>
<keyword id="KW-0479">Metal-binding</keyword>
<keyword id="KW-0547">Nucleotide-binding</keyword>
<keyword id="KW-1185">Reference proteome</keyword>
<keyword id="KW-0678">Repressor</keyword>
<keyword id="KW-0804">Transcription</keyword>
<keyword id="KW-0805">Transcription regulation</keyword>
<keyword id="KW-0862">Zinc</keyword>
<keyword id="KW-0863">Zinc-finger</keyword>
<comment type="function">
    <text evidence="1">Negatively regulates transcription of bacterial ribonucleotide reductase nrd genes and operons by binding to NrdR-boxes.</text>
</comment>
<comment type="cofactor">
    <cofactor evidence="1">
        <name>Zn(2+)</name>
        <dbReference type="ChEBI" id="CHEBI:29105"/>
    </cofactor>
    <text evidence="1">Binds 1 zinc ion.</text>
</comment>
<comment type="similarity">
    <text evidence="1">Belongs to the NrdR family.</text>
</comment>
<name>NRDR_ANAMF</name>
<evidence type="ECO:0000255" key="1">
    <source>
        <dbReference type="HAMAP-Rule" id="MF_00440"/>
    </source>
</evidence>
<organism>
    <name type="scientific">Anaplasma marginale (strain Florida)</name>
    <dbReference type="NCBI Taxonomy" id="320483"/>
    <lineage>
        <taxon>Bacteria</taxon>
        <taxon>Pseudomonadati</taxon>
        <taxon>Pseudomonadota</taxon>
        <taxon>Alphaproteobacteria</taxon>
        <taxon>Rickettsiales</taxon>
        <taxon>Anaplasmataceae</taxon>
        <taxon>Anaplasma</taxon>
    </lineage>
</organism>
<gene>
    <name evidence="1" type="primary">nrdR</name>
    <name type="ordered locus">AMF_053</name>
</gene>
<protein>
    <recommendedName>
        <fullName evidence="1">Transcriptional repressor NrdR</fullName>
    </recommendedName>
</protein>
<accession>B9KHI5</accession>
<sequence>MRCPFCNSVDTSVKNSRPSDCKMSVRRRRSCDSCNSRFTTVEELLLKPVKVLKKDGSVEAFDRQKLLTSIILATKKRPVTRDQIDMVVSNMFYKLEAIKGSVVPSGVIGGMVMESLFALDKVSYIRFASVYMNFSDVNDFSGIVERVQEVV</sequence>
<feature type="chain" id="PRO_1000191776" description="Transcriptional repressor NrdR">
    <location>
        <begin position="1"/>
        <end position="151"/>
    </location>
</feature>
<feature type="domain" description="ATP-cone" evidence="1">
    <location>
        <begin position="49"/>
        <end position="139"/>
    </location>
</feature>
<feature type="zinc finger region" evidence="1">
    <location>
        <begin position="3"/>
        <end position="34"/>
    </location>
</feature>
<proteinExistence type="inferred from homology"/>
<reference key="1">
    <citation type="journal article" date="2009" name="BMC Genomics">
        <title>Conservation in the face of diversity: multistrain analysis of an intracellular bacterium.</title>
        <authorList>
            <person name="Dark M.J."/>
            <person name="Herndon D.R."/>
            <person name="Kappmeyer L.S."/>
            <person name="Gonzales M.P."/>
            <person name="Nordeen E."/>
            <person name="Palmer G.H."/>
            <person name="Knowles D.P. Jr."/>
            <person name="Brayton K.A."/>
        </authorList>
    </citation>
    <scope>NUCLEOTIDE SEQUENCE [LARGE SCALE GENOMIC DNA]</scope>
    <source>
        <strain>Florida</strain>
    </source>
</reference>
<dbReference type="EMBL" id="CP001079">
    <property type="protein sequence ID" value="ACM48947.1"/>
    <property type="molecule type" value="Genomic_DNA"/>
</dbReference>
<dbReference type="RefSeq" id="WP_010266919.1">
    <property type="nucleotide sequence ID" value="NZ_AFMS01000190.1"/>
</dbReference>
<dbReference type="SMR" id="B9KHI5"/>
<dbReference type="STRING" id="320483.AMF_053"/>
<dbReference type="GeneID" id="7398227"/>
<dbReference type="KEGG" id="amf:AMF_053"/>
<dbReference type="eggNOG" id="COG1327">
    <property type="taxonomic scope" value="Bacteria"/>
</dbReference>
<dbReference type="HOGENOM" id="CLU_108412_0_1_5"/>
<dbReference type="Proteomes" id="UP000007307">
    <property type="component" value="Chromosome"/>
</dbReference>
<dbReference type="GO" id="GO:0005524">
    <property type="term" value="F:ATP binding"/>
    <property type="evidence" value="ECO:0007669"/>
    <property type="project" value="UniProtKB-KW"/>
</dbReference>
<dbReference type="GO" id="GO:0003677">
    <property type="term" value="F:DNA binding"/>
    <property type="evidence" value="ECO:0007669"/>
    <property type="project" value="UniProtKB-KW"/>
</dbReference>
<dbReference type="GO" id="GO:0008270">
    <property type="term" value="F:zinc ion binding"/>
    <property type="evidence" value="ECO:0007669"/>
    <property type="project" value="UniProtKB-UniRule"/>
</dbReference>
<dbReference type="GO" id="GO:0045892">
    <property type="term" value="P:negative regulation of DNA-templated transcription"/>
    <property type="evidence" value="ECO:0007669"/>
    <property type="project" value="UniProtKB-UniRule"/>
</dbReference>
<dbReference type="HAMAP" id="MF_00440">
    <property type="entry name" value="NrdR"/>
    <property type="match status" value="1"/>
</dbReference>
<dbReference type="InterPro" id="IPR005144">
    <property type="entry name" value="ATP-cone_dom"/>
</dbReference>
<dbReference type="InterPro" id="IPR055173">
    <property type="entry name" value="NrdR-like_N"/>
</dbReference>
<dbReference type="InterPro" id="IPR003796">
    <property type="entry name" value="RNR_NrdR-like"/>
</dbReference>
<dbReference type="NCBIfam" id="TIGR00244">
    <property type="entry name" value="transcriptional regulator NrdR"/>
    <property type="match status" value="1"/>
</dbReference>
<dbReference type="PANTHER" id="PTHR30455">
    <property type="entry name" value="TRANSCRIPTIONAL REPRESSOR NRDR"/>
    <property type="match status" value="1"/>
</dbReference>
<dbReference type="PANTHER" id="PTHR30455:SF2">
    <property type="entry name" value="TRANSCRIPTIONAL REPRESSOR NRDR"/>
    <property type="match status" value="1"/>
</dbReference>
<dbReference type="Pfam" id="PF03477">
    <property type="entry name" value="ATP-cone"/>
    <property type="match status" value="1"/>
</dbReference>
<dbReference type="Pfam" id="PF22811">
    <property type="entry name" value="Zn_ribbon_NrdR"/>
    <property type="match status" value="1"/>
</dbReference>
<dbReference type="PROSITE" id="PS51161">
    <property type="entry name" value="ATP_CONE"/>
    <property type="match status" value="1"/>
</dbReference>